<evidence type="ECO:0000250" key="1"/>
<evidence type="ECO:0000250" key="2">
    <source>
        <dbReference type="UniProtKB" id="P00918"/>
    </source>
</evidence>
<evidence type="ECO:0000250" key="3">
    <source>
        <dbReference type="UniProtKB" id="P23589"/>
    </source>
</evidence>
<evidence type="ECO:0000250" key="4">
    <source>
        <dbReference type="UniProtKB" id="Q9QZA0"/>
    </source>
</evidence>
<evidence type="ECO:0000255" key="5">
    <source>
        <dbReference type="PROSITE-ProRule" id="PRU01134"/>
    </source>
</evidence>
<evidence type="ECO:0000305" key="6"/>
<name>CAH5B_RAT</name>
<feature type="transit peptide" description="Mitochondrion" evidence="1">
    <location>
        <begin position="1"/>
        <end position="33"/>
    </location>
</feature>
<feature type="chain" id="PRO_0000041944" description="Carbonic anhydrase 5B, mitochondrial">
    <location>
        <begin position="34"/>
        <end position="317"/>
    </location>
</feature>
<feature type="domain" description="Alpha-carbonic anhydrase" evidence="5">
    <location>
        <begin position="37"/>
        <end position="296"/>
    </location>
</feature>
<feature type="binding site" evidence="5">
    <location>
        <position position="130"/>
    </location>
    <ligand>
        <name>Zn(2+)</name>
        <dbReference type="ChEBI" id="CHEBI:29105"/>
        <note>catalytic</note>
    </ligand>
</feature>
<feature type="binding site" evidence="5">
    <location>
        <position position="132"/>
    </location>
    <ligand>
        <name>Zn(2+)</name>
        <dbReference type="ChEBI" id="CHEBI:29105"/>
        <note>catalytic</note>
    </ligand>
</feature>
<feature type="binding site" evidence="5">
    <location>
        <position position="155"/>
    </location>
    <ligand>
        <name>Zn(2+)</name>
        <dbReference type="ChEBI" id="CHEBI:29105"/>
        <note>catalytic</note>
    </ligand>
</feature>
<feature type="binding site" evidence="2">
    <location>
        <begin position="235"/>
        <end position="236"/>
    </location>
    <ligand>
        <name>substrate</name>
    </ligand>
</feature>
<protein>
    <recommendedName>
        <fullName>Carbonic anhydrase 5B, mitochondrial</fullName>
        <ecNumber evidence="4">4.2.1.1</ecNumber>
    </recommendedName>
    <alternativeName>
        <fullName>Carbonate dehydratase VB</fullName>
    </alternativeName>
    <alternativeName>
        <fullName>Carbonic anhydrase VB</fullName>
        <shortName>CA-VB</shortName>
    </alternativeName>
</protein>
<keyword id="KW-0456">Lyase</keyword>
<keyword id="KW-0479">Metal-binding</keyword>
<keyword id="KW-0496">Mitochondrion</keyword>
<keyword id="KW-1185">Reference proteome</keyword>
<keyword id="KW-0809">Transit peptide</keyword>
<keyword id="KW-0862">Zinc</keyword>
<gene>
    <name type="primary">Ca5b</name>
    <name type="synonym">Car5b</name>
</gene>
<dbReference type="EC" id="4.2.1.1" evidence="4"/>
<dbReference type="EMBL" id="BC081872">
    <property type="protein sequence ID" value="AAH81872.1"/>
    <property type="molecule type" value="mRNA"/>
</dbReference>
<dbReference type="RefSeq" id="NP_001005551.1">
    <property type="nucleotide sequence ID" value="NM_001005551.2"/>
</dbReference>
<dbReference type="RefSeq" id="XP_006256921.1">
    <property type="nucleotide sequence ID" value="XM_006256859.3"/>
</dbReference>
<dbReference type="SMR" id="Q66HG6"/>
<dbReference type="FunCoup" id="Q66HG6">
    <property type="interactions" value="231"/>
</dbReference>
<dbReference type="STRING" id="10116.ENSRNOP00000043235"/>
<dbReference type="iPTMnet" id="Q66HG6"/>
<dbReference type="PhosphoSitePlus" id="Q66HG6"/>
<dbReference type="PaxDb" id="10116-ENSRNOP00000043235"/>
<dbReference type="Ensembl" id="ENSRNOT00000047354.5">
    <property type="protein sequence ID" value="ENSRNOP00000043235.3"/>
    <property type="gene ID" value="ENSRNOG00000029330.5"/>
</dbReference>
<dbReference type="GeneID" id="302669"/>
<dbReference type="KEGG" id="rno:302669"/>
<dbReference type="UCSC" id="RGD:1549783">
    <property type="organism name" value="rat"/>
</dbReference>
<dbReference type="AGR" id="RGD:1549783"/>
<dbReference type="CTD" id="56078"/>
<dbReference type="RGD" id="1549783">
    <property type="gene designation" value="Ca5b"/>
</dbReference>
<dbReference type="eggNOG" id="KOG0382">
    <property type="taxonomic scope" value="Eukaryota"/>
</dbReference>
<dbReference type="GeneTree" id="ENSGT00940000156978"/>
<dbReference type="HOGENOM" id="CLU_039326_2_1_1"/>
<dbReference type="InParanoid" id="Q66HG6"/>
<dbReference type="OMA" id="GESNDWG"/>
<dbReference type="PhylomeDB" id="Q66HG6"/>
<dbReference type="TreeFam" id="TF316425"/>
<dbReference type="Reactome" id="R-RNO-1475029">
    <property type="pathway name" value="Reversible hydration of carbon dioxide"/>
</dbReference>
<dbReference type="PRO" id="PR:Q66HG6"/>
<dbReference type="Proteomes" id="UP000002494">
    <property type="component" value="Chromosome X"/>
</dbReference>
<dbReference type="Bgee" id="ENSRNOG00000029330">
    <property type="expression patterns" value="Expressed in adult mammalian kidney and 18 other cell types or tissues"/>
</dbReference>
<dbReference type="GO" id="GO:0005737">
    <property type="term" value="C:cytoplasm"/>
    <property type="evidence" value="ECO:0000318"/>
    <property type="project" value="GO_Central"/>
</dbReference>
<dbReference type="GO" id="GO:0005739">
    <property type="term" value="C:mitochondrion"/>
    <property type="evidence" value="ECO:0000250"/>
    <property type="project" value="UniProtKB"/>
</dbReference>
<dbReference type="GO" id="GO:0004089">
    <property type="term" value="F:carbonate dehydratase activity"/>
    <property type="evidence" value="ECO:0000250"/>
    <property type="project" value="UniProtKB"/>
</dbReference>
<dbReference type="GO" id="GO:0008270">
    <property type="term" value="F:zinc ion binding"/>
    <property type="evidence" value="ECO:0007669"/>
    <property type="project" value="InterPro"/>
</dbReference>
<dbReference type="GO" id="GO:0009617">
    <property type="term" value="P:response to bacterium"/>
    <property type="evidence" value="ECO:0000266"/>
    <property type="project" value="RGD"/>
</dbReference>
<dbReference type="FunFam" id="3.10.200.10:FF:000001">
    <property type="entry name" value="Carbonic anhydrase 2"/>
    <property type="match status" value="1"/>
</dbReference>
<dbReference type="Gene3D" id="3.10.200.10">
    <property type="entry name" value="Alpha carbonic anhydrase"/>
    <property type="match status" value="1"/>
</dbReference>
<dbReference type="InterPro" id="IPR001148">
    <property type="entry name" value="CA_dom"/>
</dbReference>
<dbReference type="InterPro" id="IPR036398">
    <property type="entry name" value="CA_dom_sf"/>
</dbReference>
<dbReference type="InterPro" id="IPR023561">
    <property type="entry name" value="Carbonic_anhydrase_a-class"/>
</dbReference>
<dbReference type="InterPro" id="IPR018338">
    <property type="entry name" value="Carbonic_anhydrase_a-class_CS"/>
</dbReference>
<dbReference type="PANTHER" id="PTHR18952">
    <property type="entry name" value="CARBONIC ANHYDRASE"/>
    <property type="match status" value="1"/>
</dbReference>
<dbReference type="PANTHER" id="PTHR18952:SF25">
    <property type="entry name" value="CARBONIC ANHYDRASE 5B, MITOCHONDRIAL-RELATED"/>
    <property type="match status" value="1"/>
</dbReference>
<dbReference type="Pfam" id="PF00194">
    <property type="entry name" value="Carb_anhydrase"/>
    <property type="match status" value="1"/>
</dbReference>
<dbReference type="SMART" id="SM01057">
    <property type="entry name" value="Carb_anhydrase"/>
    <property type="match status" value="1"/>
</dbReference>
<dbReference type="SUPFAM" id="SSF51069">
    <property type="entry name" value="Carbonic anhydrase"/>
    <property type="match status" value="1"/>
</dbReference>
<dbReference type="PROSITE" id="PS00162">
    <property type="entry name" value="ALPHA_CA_1"/>
    <property type="match status" value="1"/>
</dbReference>
<dbReference type="PROSITE" id="PS51144">
    <property type="entry name" value="ALPHA_CA_2"/>
    <property type="match status" value="1"/>
</dbReference>
<proteinExistence type="evidence at transcript level"/>
<comment type="function">
    <text evidence="4">Mitochondrial carbonic anhydrase that catalyzes the reversible conversion of carbon dioxide to bicarbonate/HCO3.</text>
</comment>
<comment type="catalytic activity">
    <reaction evidence="4">
        <text>hydrogencarbonate + H(+) = CO2 + H2O</text>
        <dbReference type="Rhea" id="RHEA:10748"/>
        <dbReference type="ChEBI" id="CHEBI:15377"/>
        <dbReference type="ChEBI" id="CHEBI:15378"/>
        <dbReference type="ChEBI" id="CHEBI:16526"/>
        <dbReference type="ChEBI" id="CHEBI:17544"/>
        <dbReference type="EC" id="4.2.1.1"/>
    </reaction>
    <physiologicalReaction direction="left-to-right" evidence="4">
        <dbReference type="Rhea" id="RHEA:10749"/>
    </physiologicalReaction>
    <physiologicalReaction direction="right-to-left" evidence="4">
        <dbReference type="Rhea" id="RHEA:10750"/>
    </physiologicalReaction>
</comment>
<comment type="cofactor">
    <cofactor evidence="3">
        <name>Zn(2+)</name>
        <dbReference type="ChEBI" id="CHEBI:29105"/>
    </cofactor>
</comment>
<comment type="subcellular location">
    <subcellularLocation>
        <location evidence="4">Mitochondrion</location>
    </subcellularLocation>
</comment>
<comment type="similarity">
    <text evidence="6">Belongs to the alpha-carbonic anhydrase family.</text>
</comment>
<sequence length="317" mass="36598">MTVMSHLRVSLQVSSCTLLWRRFRVPRLVPLRSCSLYTCTYRTRNRALPPLWENLDLVPAGDRQSPINIRWRDSVYDPGLKPLTISYDPATCLHIWNNGYSFLVEFEDTTDKSVIEGGPLEHNYRLKQFHFHWGAIDAWGSEHTVDSKCYPAELHLVHWNAVKFESFEDAALEENGLAVIGVFLKLGKHHKELQKLVDTLPSIKHKDTLVKFGSFDPSCLMPTCPDYWTYSGSLTTPPLSESVTWIIKKQPVEVDHDQLEQFRTLLFTSEGEKEKRMVDNFRPLQPLMNRTVRSSFRHDYVLNIQVKPEPTASEVSP</sequence>
<reference key="1">
    <citation type="journal article" date="2004" name="Genome Res.">
        <title>The status, quality, and expansion of the NIH full-length cDNA project: the Mammalian Gene Collection (MGC).</title>
        <authorList>
            <consortium name="The MGC Project Team"/>
        </authorList>
    </citation>
    <scope>NUCLEOTIDE SEQUENCE [LARGE SCALE MRNA]</scope>
    <source>
        <tissue>Kidney</tissue>
    </source>
</reference>
<organism>
    <name type="scientific">Rattus norvegicus</name>
    <name type="common">Rat</name>
    <dbReference type="NCBI Taxonomy" id="10116"/>
    <lineage>
        <taxon>Eukaryota</taxon>
        <taxon>Metazoa</taxon>
        <taxon>Chordata</taxon>
        <taxon>Craniata</taxon>
        <taxon>Vertebrata</taxon>
        <taxon>Euteleostomi</taxon>
        <taxon>Mammalia</taxon>
        <taxon>Eutheria</taxon>
        <taxon>Euarchontoglires</taxon>
        <taxon>Glires</taxon>
        <taxon>Rodentia</taxon>
        <taxon>Myomorpha</taxon>
        <taxon>Muroidea</taxon>
        <taxon>Muridae</taxon>
        <taxon>Murinae</taxon>
        <taxon>Rattus</taxon>
    </lineage>
</organism>
<accession>Q66HG6</accession>